<comment type="function">
    <text evidence="1 6">Binds directly to 5'-TTAGGG-3' repeats in telomeric DNA (By similarity). Associates with the telomerase complex at sites of active telomere processing and positively regulates telomere elongation (By similarity). Important for TERT binding to chromatin, indicating a role in recruitment of the telomerase complex to telomeres (PubMed:23685356). Also plays a role in the alternative lengthening of telomeres (ALT) pathway in telomerase-negative cells where it promotes formation and/or maintenance of ALT-associated promyelocytic leukemia bodies (APBs) (By similarity). Enhances formation of telomere C-circles in ALT cells, suggesting a possible role in telomere recombination (By similarity). Might also be involved in the DNA damage response at telomeres (By similarity).</text>
</comment>
<comment type="subunit">
    <text evidence="1">Associates with the telomerase holoenzyme complex. Interacts with DKC1, XRCC6 and COIL.</text>
</comment>
<comment type="subcellular location">
    <subcellularLocation>
        <location evidence="6">Nucleus</location>
    </subcellularLocation>
    <subcellularLocation>
        <location evidence="1">Cytoplasm</location>
    </subcellularLocation>
    <subcellularLocation>
        <location evidence="6">Chromosome</location>
        <location evidence="6">Telomere</location>
    </subcellularLocation>
    <subcellularLocation>
        <location evidence="1">Nucleus</location>
        <location evidence="1">Cajal body</location>
    </subcellularLocation>
    <subcellularLocation>
        <location evidence="1">Nucleus</location>
        <location evidence="1">PML body</location>
    </subcellularLocation>
    <text evidence="1">Predominantly detected in cytoplasm. Localizes in a dynamic manner to actively processed telomeres. Localizes to the periphery of Cajal bodies. Associates with PML nuclear bodies in telomerase-negative cells.</text>
</comment>
<comment type="alternative products">
    <event type="alternative splicing"/>
    <isoform>
        <id>Q8BJA3-1</id>
        <name>1</name>
        <sequence type="displayed"/>
    </isoform>
    <isoform>
        <id>Q8BJA3-2</id>
        <name>2</name>
        <sequence type="described" ref="VSP_018114 VSP_018115"/>
    </isoform>
    <isoform>
        <id>Q8BJA3-3</id>
        <name>3</name>
        <sequence type="described" ref="VSP_018116"/>
    </isoform>
    <isoform>
        <id>Q8BJA3-4</id>
        <name>4</name>
        <sequence type="described" ref="VSP_018115"/>
    </isoform>
</comment>
<comment type="domain">
    <text evidence="1">The homeobox domain is required for binding to 5'-TTAGGG-3' repeats in telomeres, and for telomere localization.</text>
</comment>
<comment type="caution">
    <text evidence="1">Reported to have transcriptional repression activity in vitro. However, it is unclear whether this protein has any function in transcription in vivo.</text>
</comment>
<dbReference type="EMBL" id="AK052729">
    <property type="protein sequence ID" value="BAC35118.1"/>
    <property type="molecule type" value="mRNA"/>
</dbReference>
<dbReference type="EMBL" id="AK089782">
    <property type="protein sequence ID" value="BAC40961.1"/>
    <property type="molecule type" value="mRNA"/>
</dbReference>
<dbReference type="EMBL" id="BC002212">
    <property type="protein sequence ID" value="AAH02212.1"/>
    <property type="molecule type" value="mRNA"/>
</dbReference>
<dbReference type="EMBL" id="BC051457">
    <property type="protein sequence ID" value="AAH51457.1"/>
    <property type="molecule type" value="mRNA"/>
</dbReference>
<dbReference type="CCDS" id="CCDS36955.1">
    <molecule id="Q8BJA3-1"/>
</dbReference>
<dbReference type="CCDS" id="CCDS84149.1">
    <molecule id="Q8BJA3-2"/>
</dbReference>
<dbReference type="RefSeq" id="NP_001334555.1">
    <property type="nucleotide sequence ID" value="NM_001347626.1"/>
</dbReference>
<dbReference type="RefSeq" id="NP_001334556.1">
    <molecule id="Q8BJA3-2"/>
    <property type="nucleotide sequence ID" value="NM_001347627.2"/>
</dbReference>
<dbReference type="RefSeq" id="NP_796312.2">
    <molecule id="Q8BJA3-1"/>
    <property type="nucleotide sequence ID" value="NM_177338.6"/>
</dbReference>
<dbReference type="RefSeq" id="XP_011243336.1">
    <molecule id="Q8BJA3-2"/>
    <property type="nucleotide sequence ID" value="XM_011245034.4"/>
</dbReference>
<dbReference type="RefSeq" id="XP_011243337.1">
    <molecule id="Q8BJA3-4"/>
    <property type="nucleotide sequence ID" value="XM_011245035.4"/>
</dbReference>
<dbReference type="RefSeq" id="XP_011243338.1">
    <molecule id="Q8BJA3-4"/>
    <property type="nucleotide sequence ID" value="XM_011245036.4"/>
</dbReference>
<dbReference type="RefSeq" id="XP_036014461.1">
    <molecule id="Q8BJA3-4"/>
    <property type="nucleotide sequence ID" value="XM_036158568.1"/>
</dbReference>
<dbReference type="BMRB" id="Q8BJA3"/>
<dbReference type="SMR" id="Q8BJA3"/>
<dbReference type="BioGRID" id="230121">
    <property type="interactions" value="1"/>
</dbReference>
<dbReference type="FunCoup" id="Q8BJA3">
    <property type="interactions" value="4310"/>
</dbReference>
<dbReference type="IntAct" id="Q8BJA3">
    <property type="interactions" value="9"/>
</dbReference>
<dbReference type="MINT" id="Q8BJA3"/>
<dbReference type="STRING" id="10090.ENSMUSP00000135448"/>
<dbReference type="GlyGen" id="Q8BJA3">
    <property type="glycosylation" value="1 site"/>
</dbReference>
<dbReference type="iPTMnet" id="Q8BJA3"/>
<dbReference type="PhosphoSitePlus" id="Q8BJA3"/>
<dbReference type="jPOST" id="Q8BJA3"/>
<dbReference type="PaxDb" id="10090-ENSMUSP00000135372"/>
<dbReference type="ProteomicsDB" id="269573">
    <molecule id="Q8BJA3-1"/>
</dbReference>
<dbReference type="ProteomicsDB" id="269574">
    <molecule id="Q8BJA3-2"/>
</dbReference>
<dbReference type="ProteomicsDB" id="269575">
    <molecule id="Q8BJA3-3"/>
</dbReference>
<dbReference type="ProteomicsDB" id="269576">
    <molecule id="Q8BJA3-4"/>
</dbReference>
<dbReference type="Antibodypedia" id="10471">
    <property type="antibodies" value="169 antibodies from 28 providers"/>
</dbReference>
<dbReference type="DNASU" id="219150"/>
<dbReference type="Ensembl" id="ENSMUST00000022544.14">
    <molecule id="Q8BJA3-2"/>
    <property type="protein sequence ID" value="ENSMUSP00000022544.8"/>
    <property type="gene ID" value="ENSMUSG00000021972.15"/>
</dbReference>
<dbReference type="Ensembl" id="ENSMUST00000067843.10">
    <molecule id="Q8BJA3-1"/>
    <property type="protein sequence ID" value="ENSMUSP00000066905.4"/>
    <property type="gene ID" value="ENSMUSG00000021972.15"/>
</dbReference>
<dbReference type="GeneID" id="219150"/>
<dbReference type="KEGG" id="mmu:219150"/>
<dbReference type="UCSC" id="uc007uip.1">
    <molecule id="Q8BJA3-4"/>
    <property type="organism name" value="mouse"/>
</dbReference>
<dbReference type="UCSC" id="uc007uiq.1">
    <molecule id="Q8BJA3-2"/>
    <property type="organism name" value="mouse"/>
</dbReference>
<dbReference type="UCSC" id="uc007uir.1">
    <molecule id="Q8BJA3-1"/>
    <property type="organism name" value="mouse"/>
</dbReference>
<dbReference type="AGR" id="MGI:2445066"/>
<dbReference type="CTD" id="79618"/>
<dbReference type="MGI" id="MGI:2445066">
    <property type="gene designation" value="Hmbox1"/>
</dbReference>
<dbReference type="VEuPathDB" id="HostDB:ENSMUSG00000021972"/>
<dbReference type="eggNOG" id="ENOG502QQSR">
    <property type="taxonomic scope" value="Eukaryota"/>
</dbReference>
<dbReference type="GeneTree" id="ENSGT00940000154928"/>
<dbReference type="InParanoid" id="Q8BJA3"/>
<dbReference type="PhylomeDB" id="Q8BJA3"/>
<dbReference type="BioGRID-ORCS" id="219150">
    <property type="hits" value="3 hits in 78 CRISPR screens"/>
</dbReference>
<dbReference type="ChiTaRS" id="Hmbox1">
    <property type="organism name" value="mouse"/>
</dbReference>
<dbReference type="PRO" id="PR:Q8BJA3"/>
<dbReference type="Proteomes" id="UP000000589">
    <property type="component" value="Chromosome 14"/>
</dbReference>
<dbReference type="RNAct" id="Q8BJA3">
    <property type="molecule type" value="protein"/>
</dbReference>
<dbReference type="Bgee" id="ENSMUSG00000021972">
    <property type="expression patterns" value="Expressed in undifferentiated genital tubercle and 261 other cell types or tissues"/>
</dbReference>
<dbReference type="ExpressionAtlas" id="Q8BJA3">
    <property type="expression patterns" value="baseline and differential"/>
</dbReference>
<dbReference type="GO" id="GO:0015030">
    <property type="term" value="C:Cajal body"/>
    <property type="evidence" value="ECO:0007669"/>
    <property type="project" value="UniProtKB-SubCell"/>
</dbReference>
<dbReference type="GO" id="GO:0000781">
    <property type="term" value="C:chromosome, telomeric region"/>
    <property type="evidence" value="ECO:0000314"/>
    <property type="project" value="BHF-UCL"/>
</dbReference>
<dbReference type="GO" id="GO:0005737">
    <property type="term" value="C:cytoplasm"/>
    <property type="evidence" value="ECO:0000250"/>
    <property type="project" value="UniProtKB"/>
</dbReference>
<dbReference type="GO" id="GO:0005634">
    <property type="term" value="C:nucleus"/>
    <property type="evidence" value="ECO:0000314"/>
    <property type="project" value="BHF-UCL"/>
</dbReference>
<dbReference type="GO" id="GO:0016605">
    <property type="term" value="C:PML body"/>
    <property type="evidence" value="ECO:0007669"/>
    <property type="project" value="UniProtKB-SubCell"/>
</dbReference>
<dbReference type="GO" id="GO:0003691">
    <property type="term" value="F:double-stranded telomeric DNA binding"/>
    <property type="evidence" value="ECO:0007669"/>
    <property type="project" value="InterPro"/>
</dbReference>
<dbReference type="GO" id="GO:0044877">
    <property type="term" value="F:protein-containing complex binding"/>
    <property type="evidence" value="ECO:0000353"/>
    <property type="project" value="BHF-UCL"/>
</dbReference>
<dbReference type="GO" id="GO:0042162">
    <property type="term" value="F:telomeric DNA binding"/>
    <property type="evidence" value="ECO:0000314"/>
    <property type="project" value="BHF-UCL"/>
</dbReference>
<dbReference type="GO" id="GO:0045892">
    <property type="term" value="P:negative regulation of DNA-templated transcription"/>
    <property type="evidence" value="ECO:0000250"/>
    <property type="project" value="UniProtKB"/>
</dbReference>
<dbReference type="GO" id="GO:0045893">
    <property type="term" value="P:positive regulation of DNA-templated transcription"/>
    <property type="evidence" value="ECO:0007669"/>
    <property type="project" value="InterPro"/>
</dbReference>
<dbReference type="GO" id="GO:0007004">
    <property type="term" value="P:telomere maintenance via telomerase"/>
    <property type="evidence" value="ECO:0000315"/>
    <property type="project" value="BHF-UCL"/>
</dbReference>
<dbReference type="CDD" id="cd00086">
    <property type="entry name" value="homeodomain"/>
    <property type="match status" value="1"/>
</dbReference>
<dbReference type="CDD" id="cd00093">
    <property type="entry name" value="HTH_XRE"/>
    <property type="match status" value="1"/>
</dbReference>
<dbReference type="FunFam" id="1.10.10.60:FF:000038">
    <property type="entry name" value="Homeobox-containing protein 1 isoform X2"/>
    <property type="match status" value="1"/>
</dbReference>
<dbReference type="FunFam" id="1.10.260.40:FF:000011">
    <property type="entry name" value="homeobox-containing protein 1 isoform X2"/>
    <property type="match status" value="1"/>
</dbReference>
<dbReference type="Gene3D" id="1.10.10.60">
    <property type="entry name" value="Homeodomain-like"/>
    <property type="match status" value="1"/>
</dbReference>
<dbReference type="Gene3D" id="1.10.260.40">
    <property type="entry name" value="lambda repressor-like DNA-binding domains"/>
    <property type="match status" value="1"/>
</dbReference>
<dbReference type="InterPro" id="IPR001387">
    <property type="entry name" value="Cro/C1-type_HTH"/>
</dbReference>
<dbReference type="InterPro" id="IPR001356">
    <property type="entry name" value="HD"/>
</dbReference>
<dbReference type="InterPro" id="IPR040363">
    <property type="entry name" value="HMBOX1"/>
</dbReference>
<dbReference type="InterPro" id="IPR006899">
    <property type="entry name" value="HNF-1_N"/>
</dbReference>
<dbReference type="InterPro" id="IPR044869">
    <property type="entry name" value="HNF-1_POU"/>
</dbReference>
<dbReference type="InterPro" id="IPR044866">
    <property type="entry name" value="HNF_P1"/>
</dbReference>
<dbReference type="InterPro" id="IPR009057">
    <property type="entry name" value="Homeodomain-like_sf"/>
</dbReference>
<dbReference type="InterPro" id="IPR010982">
    <property type="entry name" value="Lambda_DNA-bd_dom_sf"/>
</dbReference>
<dbReference type="PANTHER" id="PTHR14618:SF0">
    <property type="entry name" value="HOMEOBOX-CONTAINING PROTEIN 1"/>
    <property type="match status" value="1"/>
</dbReference>
<dbReference type="PANTHER" id="PTHR14618">
    <property type="entry name" value="HOMEODOX-CONTAINING PROTEIN 1 HMBOX1"/>
    <property type="match status" value="1"/>
</dbReference>
<dbReference type="Pfam" id="PF04814">
    <property type="entry name" value="HNF-1_N"/>
    <property type="match status" value="1"/>
</dbReference>
<dbReference type="Pfam" id="PF00046">
    <property type="entry name" value="Homeodomain"/>
    <property type="match status" value="1"/>
</dbReference>
<dbReference type="SMART" id="SM00389">
    <property type="entry name" value="HOX"/>
    <property type="match status" value="1"/>
</dbReference>
<dbReference type="SUPFAM" id="SSF46689">
    <property type="entry name" value="Homeodomain-like"/>
    <property type="match status" value="1"/>
</dbReference>
<dbReference type="SUPFAM" id="SSF47413">
    <property type="entry name" value="lambda repressor-like DNA-binding domains"/>
    <property type="match status" value="1"/>
</dbReference>
<dbReference type="PROSITE" id="PS51937">
    <property type="entry name" value="HNF_P1"/>
    <property type="match status" value="1"/>
</dbReference>
<dbReference type="PROSITE" id="PS50071">
    <property type="entry name" value="HOMEOBOX_2"/>
    <property type="match status" value="1"/>
</dbReference>
<dbReference type="PROSITE" id="PS51936">
    <property type="entry name" value="POU_4"/>
    <property type="match status" value="1"/>
</dbReference>
<accession>Q8BJA3</accession>
<accession>Q80WC2</accession>
<accession>Q8BWE7</accession>
<accession>Q99LV1</accession>
<sequence>MLSSFPVVLLETMSHYTDEPRFTIEQIDLLQRLRRTGMTKHEILHALETLDRLDQEHSDKFGRRSSYGGSSYGNSTNNVPASSSTATASTQTQHSGMSPSPSNSYDTSPLPCTTNQNGRENNDRLSTSNGKMSPSRYHANSMGQRSYSFEASEEDLDVDDKVEELMRRDSSVIKEEIKAFLANRRISQAVVAQVTGISQSRISHWLLQQGSDLSEQKKRAFYRWYQLEKTNPGATLSMRPAPIPIEDPEWRQTPPPVSATPGTFRLRRGSRFTWRKECLAVMESYFNENQYPDEAKREEIANACNAVIQKPGKKLSDLERVTSLKVYNWFANRRKEIKRRANIAAILESHGIDVQSPGGHSNSDDVDGNDYSEQDDSTSHSDHQDPISLAVEMAAVNHTILALARQGANEIKTEALDDD</sequence>
<organism>
    <name type="scientific">Mus musculus</name>
    <name type="common">Mouse</name>
    <dbReference type="NCBI Taxonomy" id="10090"/>
    <lineage>
        <taxon>Eukaryota</taxon>
        <taxon>Metazoa</taxon>
        <taxon>Chordata</taxon>
        <taxon>Craniata</taxon>
        <taxon>Vertebrata</taxon>
        <taxon>Euteleostomi</taxon>
        <taxon>Mammalia</taxon>
        <taxon>Eutheria</taxon>
        <taxon>Euarchontoglires</taxon>
        <taxon>Glires</taxon>
        <taxon>Rodentia</taxon>
        <taxon>Myomorpha</taxon>
        <taxon>Muroidea</taxon>
        <taxon>Muridae</taxon>
        <taxon>Murinae</taxon>
        <taxon>Mus</taxon>
        <taxon>Mus</taxon>
    </lineage>
</organism>
<gene>
    <name type="primary">Hmbox1</name>
</gene>
<feature type="chain" id="PRO_0000233288" description="Homeobox-containing protein 1">
    <location>
        <begin position="1"/>
        <end position="419"/>
    </location>
</feature>
<feature type="domain" description="HNF-p1" evidence="4">
    <location>
        <begin position="18"/>
        <end position="49"/>
    </location>
</feature>
<feature type="domain" description="POU-specific atypical" evidence="3">
    <location>
        <begin position="145"/>
        <end position="241"/>
    </location>
</feature>
<feature type="DNA-binding region" description="Homeobox" evidence="2">
    <location>
        <begin position="267"/>
        <end position="341"/>
    </location>
</feature>
<feature type="region of interest" description="Disordered" evidence="5">
    <location>
        <begin position="56"/>
        <end position="152"/>
    </location>
</feature>
<feature type="region of interest" description="Disordered" evidence="5">
    <location>
        <begin position="352"/>
        <end position="384"/>
    </location>
</feature>
<feature type="compositionally biased region" description="Low complexity" evidence="5">
    <location>
        <begin position="64"/>
        <end position="73"/>
    </location>
</feature>
<feature type="compositionally biased region" description="Low complexity" evidence="5">
    <location>
        <begin position="81"/>
        <end position="93"/>
    </location>
</feature>
<feature type="compositionally biased region" description="Polar residues" evidence="5">
    <location>
        <begin position="94"/>
        <end position="132"/>
    </location>
</feature>
<feature type="compositionally biased region" description="Acidic residues" evidence="5">
    <location>
        <begin position="364"/>
        <end position="376"/>
    </location>
</feature>
<feature type="site" description="Critical for recognition and binding of 5'-TTAGGG-3' motifs in telomeric DNA" evidence="1">
    <location>
        <position position="335"/>
    </location>
</feature>
<feature type="modified residue" description="Phosphoserine" evidence="1">
    <location>
        <position position="148"/>
    </location>
</feature>
<feature type="modified residue" description="Phosphoserine" evidence="1">
    <location>
        <position position="170"/>
    </location>
</feature>
<feature type="cross-link" description="Glycyl lysine isopeptide (Lys-Gly) (interchain with G-Cter in SUMO2)" evidence="1">
    <location>
        <position position="60"/>
    </location>
</feature>
<feature type="cross-link" description="Glycyl lysine isopeptide (Lys-Gly) (interchain with G-Cter in SUMO2)" evidence="1">
    <location>
        <position position="131"/>
    </location>
</feature>
<feature type="cross-link" description="Glycyl lysine isopeptide (Lys-Gly) (interchain with G-Cter in SUMO2)" evidence="1">
    <location>
        <position position="161"/>
    </location>
</feature>
<feature type="cross-link" description="Glycyl lysine isopeptide (Lys-Gly) (interchain with G-Cter in SUMO2)" evidence="1">
    <location>
        <position position="174"/>
    </location>
</feature>
<feature type="cross-link" description="Glycyl lysine isopeptide (Lys-Gly) (interchain with G-Cter in SUMO2)" evidence="1">
    <location>
        <position position="217"/>
    </location>
</feature>
<feature type="cross-link" description="Glycyl lysine isopeptide (Lys-Gly) (interchain with G-Cter in SUMO2)" evidence="1">
    <location>
        <position position="310"/>
    </location>
</feature>
<feature type="cross-link" description="Glycyl lysine isopeptide (Lys-Gly) (interchain with G-Cter in SUMO1); alternate" evidence="1">
    <location>
        <position position="412"/>
    </location>
</feature>
<feature type="cross-link" description="Glycyl lysine isopeptide (Lys-Gly) (interchain with G-Cter in SUMO2); alternate" evidence="1">
    <location>
        <position position="412"/>
    </location>
</feature>
<feature type="splice variant" id="VSP_018114" description="In isoform 2." evidence="7">
    <original>I</original>
    <variation>IE</variation>
    <location>
        <position position="343"/>
    </location>
</feature>
<feature type="splice variant" id="VSP_018115" description="In isoform 2 and isoform 4." evidence="7">
    <original>DDSTSHSDHQDPISLAVEMAAVNHTILALARQGANEIKTEALDDD</original>
    <variation>SSFAGALIQLERQKGPPGCQQLPVLSGLL</variation>
    <location>
        <begin position="375"/>
        <end position="419"/>
    </location>
</feature>
<feature type="splice variant" id="VSP_018116" description="In isoform 3." evidence="8">
    <original>DSTSHSDHQDPISLAVEMAAVNHTILALARQGANEIKTEALDDD</original>
    <variation>TWQARNGEEEEERSSEGGREAEKVEEERRI</variation>
    <location>
        <begin position="376"/>
        <end position="419"/>
    </location>
</feature>
<proteinExistence type="evidence at protein level"/>
<keyword id="KW-0025">Alternative splicing</keyword>
<keyword id="KW-0158">Chromosome</keyword>
<keyword id="KW-0963">Cytoplasm</keyword>
<keyword id="KW-0238">DNA-binding</keyword>
<keyword id="KW-0371">Homeobox</keyword>
<keyword id="KW-1017">Isopeptide bond</keyword>
<keyword id="KW-0539">Nucleus</keyword>
<keyword id="KW-0597">Phosphoprotein</keyword>
<keyword id="KW-1185">Reference proteome</keyword>
<keyword id="KW-0779">Telomere</keyword>
<keyword id="KW-0804">Transcription</keyword>
<keyword id="KW-0805">Transcription regulation</keyword>
<keyword id="KW-0832">Ubl conjugation</keyword>
<protein>
    <recommendedName>
        <fullName>Homeobox-containing protein 1</fullName>
    </recommendedName>
</protein>
<name>HMBX1_MOUSE</name>
<evidence type="ECO:0000250" key="1">
    <source>
        <dbReference type="UniProtKB" id="Q6NT76"/>
    </source>
</evidence>
<evidence type="ECO:0000255" key="2">
    <source>
        <dbReference type="PROSITE-ProRule" id="PRU00108"/>
    </source>
</evidence>
<evidence type="ECO:0000255" key="3">
    <source>
        <dbReference type="PROSITE-ProRule" id="PRU01285"/>
    </source>
</evidence>
<evidence type="ECO:0000255" key="4">
    <source>
        <dbReference type="PROSITE-ProRule" id="PRU01286"/>
    </source>
</evidence>
<evidence type="ECO:0000256" key="5">
    <source>
        <dbReference type="SAM" id="MobiDB-lite"/>
    </source>
</evidence>
<evidence type="ECO:0000269" key="6">
    <source>
    </source>
</evidence>
<evidence type="ECO:0000303" key="7">
    <source>
    </source>
</evidence>
<evidence type="ECO:0000303" key="8">
    <source>
    </source>
</evidence>
<reference key="1">
    <citation type="journal article" date="2005" name="Science">
        <title>The transcriptional landscape of the mammalian genome.</title>
        <authorList>
            <person name="Carninci P."/>
            <person name="Kasukawa T."/>
            <person name="Katayama S."/>
            <person name="Gough J."/>
            <person name="Frith M.C."/>
            <person name="Maeda N."/>
            <person name="Oyama R."/>
            <person name="Ravasi T."/>
            <person name="Lenhard B."/>
            <person name="Wells C."/>
            <person name="Kodzius R."/>
            <person name="Shimokawa K."/>
            <person name="Bajic V.B."/>
            <person name="Brenner S.E."/>
            <person name="Batalov S."/>
            <person name="Forrest A.R."/>
            <person name="Zavolan M."/>
            <person name="Davis M.J."/>
            <person name="Wilming L.G."/>
            <person name="Aidinis V."/>
            <person name="Allen J.E."/>
            <person name="Ambesi-Impiombato A."/>
            <person name="Apweiler R."/>
            <person name="Aturaliya R.N."/>
            <person name="Bailey T.L."/>
            <person name="Bansal M."/>
            <person name="Baxter L."/>
            <person name="Beisel K.W."/>
            <person name="Bersano T."/>
            <person name="Bono H."/>
            <person name="Chalk A.M."/>
            <person name="Chiu K.P."/>
            <person name="Choudhary V."/>
            <person name="Christoffels A."/>
            <person name="Clutterbuck D.R."/>
            <person name="Crowe M.L."/>
            <person name="Dalla E."/>
            <person name="Dalrymple B.P."/>
            <person name="de Bono B."/>
            <person name="Della Gatta G."/>
            <person name="di Bernardo D."/>
            <person name="Down T."/>
            <person name="Engstrom P."/>
            <person name="Fagiolini M."/>
            <person name="Faulkner G."/>
            <person name="Fletcher C.F."/>
            <person name="Fukushima T."/>
            <person name="Furuno M."/>
            <person name="Futaki S."/>
            <person name="Gariboldi M."/>
            <person name="Georgii-Hemming P."/>
            <person name="Gingeras T.R."/>
            <person name="Gojobori T."/>
            <person name="Green R.E."/>
            <person name="Gustincich S."/>
            <person name="Harbers M."/>
            <person name="Hayashi Y."/>
            <person name="Hensch T.K."/>
            <person name="Hirokawa N."/>
            <person name="Hill D."/>
            <person name="Huminiecki L."/>
            <person name="Iacono M."/>
            <person name="Ikeo K."/>
            <person name="Iwama A."/>
            <person name="Ishikawa T."/>
            <person name="Jakt M."/>
            <person name="Kanapin A."/>
            <person name="Katoh M."/>
            <person name="Kawasawa Y."/>
            <person name="Kelso J."/>
            <person name="Kitamura H."/>
            <person name="Kitano H."/>
            <person name="Kollias G."/>
            <person name="Krishnan S.P."/>
            <person name="Kruger A."/>
            <person name="Kummerfeld S.K."/>
            <person name="Kurochkin I.V."/>
            <person name="Lareau L.F."/>
            <person name="Lazarevic D."/>
            <person name="Lipovich L."/>
            <person name="Liu J."/>
            <person name="Liuni S."/>
            <person name="McWilliam S."/>
            <person name="Madan Babu M."/>
            <person name="Madera M."/>
            <person name="Marchionni L."/>
            <person name="Matsuda H."/>
            <person name="Matsuzawa S."/>
            <person name="Miki H."/>
            <person name="Mignone F."/>
            <person name="Miyake S."/>
            <person name="Morris K."/>
            <person name="Mottagui-Tabar S."/>
            <person name="Mulder N."/>
            <person name="Nakano N."/>
            <person name="Nakauchi H."/>
            <person name="Ng P."/>
            <person name="Nilsson R."/>
            <person name="Nishiguchi S."/>
            <person name="Nishikawa S."/>
            <person name="Nori F."/>
            <person name="Ohara O."/>
            <person name="Okazaki Y."/>
            <person name="Orlando V."/>
            <person name="Pang K.C."/>
            <person name="Pavan W.J."/>
            <person name="Pavesi G."/>
            <person name="Pesole G."/>
            <person name="Petrovsky N."/>
            <person name="Piazza S."/>
            <person name="Reed J."/>
            <person name="Reid J.F."/>
            <person name="Ring B.Z."/>
            <person name="Ringwald M."/>
            <person name="Rost B."/>
            <person name="Ruan Y."/>
            <person name="Salzberg S.L."/>
            <person name="Sandelin A."/>
            <person name="Schneider C."/>
            <person name="Schoenbach C."/>
            <person name="Sekiguchi K."/>
            <person name="Semple C.A."/>
            <person name="Seno S."/>
            <person name="Sessa L."/>
            <person name="Sheng Y."/>
            <person name="Shibata Y."/>
            <person name="Shimada H."/>
            <person name="Shimada K."/>
            <person name="Silva D."/>
            <person name="Sinclair B."/>
            <person name="Sperling S."/>
            <person name="Stupka E."/>
            <person name="Sugiura K."/>
            <person name="Sultana R."/>
            <person name="Takenaka Y."/>
            <person name="Taki K."/>
            <person name="Tammoja K."/>
            <person name="Tan S.L."/>
            <person name="Tang S."/>
            <person name="Taylor M.S."/>
            <person name="Tegner J."/>
            <person name="Teichmann S.A."/>
            <person name="Ueda H.R."/>
            <person name="van Nimwegen E."/>
            <person name="Verardo R."/>
            <person name="Wei C.L."/>
            <person name="Yagi K."/>
            <person name="Yamanishi H."/>
            <person name="Zabarovsky E."/>
            <person name="Zhu S."/>
            <person name="Zimmer A."/>
            <person name="Hide W."/>
            <person name="Bult C."/>
            <person name="Grimmond S.M."/>
            <person name="Teasdale R.D."/>
            <person name="Liu E.T."/>
            <person name="Brusic V."/>
            <person name="Quackenbush J."/>
            <person name="Wahlestedt C."/>
            <person name="Mattick J.S."/>
            <person name="Hume D.A."/>
            <person name="Kai C."/>
            <person name="Sasaki D."/>
            <person name="Tomaru Y."/>
            <person name="Fukuda S."/>
            <person name="Kanamori-Katayama M."/>
            <person name="Suzuki M."/>
            <person name="Aoki J."/>
            <person name="Arakawa T."/>
            <person name="Iida J."/>
            <person name="Imamura K."/>
            <person name="Itoh M."/>
            <person name="Kato T."/>
            <person name="Kawaji H."/>
            <person name="Kawagashira N."/>
            <person name="Kawashima T."/>
            <person name="Kojima M."/>
            <person name="Kondo S."/>
            <person name="Konno H."/>
            <person name="Nakano K."/>
            <person name="Ninomiya N."/>
            <person name="Nishio T."/>
            <person name="Okada M."/>
            <person name="Plessy C."/>
            <person name="Shibata K."/>
            <person name="Shiraki T."/>
            <person name="Suzuki S."/>
            <person name="Tagami M."/>
            <person name="Waki K."/>
            <person name="Watahiki A."/>
            <person name="Okamura-Oho Y."/>
            <person name="Suzuki H."/>
            <person name="Kawai J."/>
            <person name="Hayashizaki Y."/>
        </authorList>
    </citation>
    <scope>NUCLEOTIDE SEQUENCE [LARGE SCALE MRNA] (ISOFORMS 1 AND 3)</scope>
    <source>
        <strain>C57BL/6J</strain>
        <strain>NOD</strain>
        <tissue>Kidney</tissue>
        <tissue>Spleen</tissue>
    </source>
</reference>
<reference key="2">
    <citation type="journal article" date="2004" name="Genome Res.">
        <title>The status, quality, and expansion of the NIH full-length cDNA project: the Mammalian Gene Collection (MGC).</title>
        <authorList>
            <consortium name="The MGC Project Team"/>
        </authorList>
    </citation>
    <scope>NUCLEOTIDE SEQUENCE [LARGE SCALE MRNA] (ISOFORM 2)</scope>
    <scope>NUCLEOTIDE SEQUENCE [LARGE SCALE MRNA] OF 100-419 (ISOFORM 4)</scope>
    <source>
        <strain>FVB/N</strain>
        <tissue>Colon</tissue>
        <tissue>Mammary gland</tissue>
        <tissue>Mammary tumor</tissue>
    </source>
</reference>
<reference key="3">
    <citation type="journal article" date="2010" name="Cell">
        <title>A tissue-specific atlas of mouse protein phosphorylation and expression.</title>
        <authorList>
            <person name="Huttlin E.L."/>
            <person name="Jedrychowski M.P."/>
            <person name="Elias J.E."/>
            <person name="Goswami T."/>
            <person name="Rad R."/>
            <person name="Beausoleil S.A."/>
            <person name="Villen J."/>
            <person name="Haas W."/>
            <person name="Sowa M.E."/>
            <person name="Gygi S.P."/>
        </authorList>
    </citation>
    <scope>IDENTIFICATION BY MASS SPECTROMETRY [LARGE SCALE ANALYSIS]</scope>
    <source>
        <tissue>Kidney</tissue>
        <tissue>Spleen</tissue>
    </source>
</reference>
<reference key="4">
    <citation type="journal article" date="2013" name="EMBO J.">
        <title>HOT1 is a mammalian direct telomere repeat-binding protein contributing to telomerase recruitment.</title>
        <authorList>
            <person name="Kappei D."/>
            <person name="Butter F."/>
            <person name="Benda C."/>
            <person name="Scheibe M."/>
            <person name="Draskovic I."/>
            <person name="Stevense M."/>
            <person name="Novo C.L."/>
            <person name="Basquin C."/>
            <person name="Araki M."/>
            <person name="Araki K."/>
            <person name="Krastev D.B."/>
            <person name="Kittler R."/>
            <person name="Jessberger R."/>
            <person name="Londono-Vallejo J.A."/>
            <person name="Mann M."/>
            <person name="Buchholz F."/>
        </authorList>
    </citation>
    <scope>FUNCTION</scope>
    <scope>SUBCELLULAR LOCATION</scope>
    <scope>IDENTIFICATION BY MASS SPECTROMETRY</scope>
</reference>